<accession>A1ALV9</accession>
<sequence>MSNTLKITLVKSLIGTPKQQRNVVAGLGLKKLNTTVVRSDTPEIRGMINKISHMLHIA</sequence>
<gene>
    <name evidence="1" type="primary">rpmD</name>
    <name type="ordered locus">Ppro_0698</name>
</gene>
<protein>
    <recommendedName>
        <fullName evidence="1">Large ribosomal subunit protein uL30</fullName>
    </recommendedName>
    <alternativeName>
        <fullName evidence="2">50S ribosomal protein L30</fullName>
    </alternativeName>
</protein>
<reference key="1">
    <citation type="submission" date="2006-10" db="EMBL/GenBank/DDBJ databases">
        <title>Complete sequence of chromosome of Pelobacter propionicus DSM 2379.</title>
        <authorList>
            <consortium name="US DOE Joint Genome Institute"/>
            <person name="Copeland A."/>
            <person name="Lucas S."/>
            <person name="Lapidus A."/>
            <person name="Barry K."/>
            <person name="Detter J.C."/>
            <person name="Glavina del Rio T."/>
            <person name="Hammon N."/>
            <person name="Israni S."/>
            <person name="Dalin E."/>
            <person name="Tice H."/>
            <person name="Pitluck S."/>
            <person name="Saunders E."/>
            <person name="Brettin T."/>
            <person name="Bruce D."/>
            <person name="Han C."/>
            <person name="Tapia R."/>
            <person name="Schmutz J."/>
            <person name="Larimer F."/>
            <person name="Land M."/>
            <person name="Hauser L."/>
            <person name="Kyrpides N."/>
            <person name="Kim E."/>
            <person name="Lovley D."/>
            <person name="Richardson P."/>
        </authorList>
    </citation>
    <scope>NUCLEOTIDE SEQUENCE [LARGE SCALE GENOMIC DNA]</scope>
    <source>
        <strain>DSM 2379 / NBRC 103807 / OttBd1</strain>
    </source>
</reference>
<comment type="subunit">
    <text evidence="1">Part of the 50S ribosomal subunit.</text>
</comment>
<comment type="similarity">
    <text evidence="1">Belongs to the universal ribosomal protein uL30 family.</text>
</comment>
<organism>
    <name type="scientific">Pelobacter propionicus (strain DSM 2379 / NBRC 103807 / OttBd1)</name>
    <dbReference type="NCBI Taxonomy" id="338966"/>
    <lineage>
        <taxon>Bacteria</taxon>
        <taxon>Pseudomonadati</taxon>
        <taxon>Thermodesulfobacteriota</taxon>
        <taxon>Desulfuromonadia</taxon>
        <taxon>Desulfuromonadales</taxon>
        <taxon>Desulfuromonadaceae</taxon>
        <taxon>Pelobacter</taxon>
    </lineage>
</organism>
<name>RL30_PELPD</name>
<proteinExistence type="inferred from homology"/>
<feature type="chain" id="PRO_1000056089" description="Large ribosomal subunit protein uL30">
    <location>
        <begin position="1"/>
        <end position="58"/>
    </location>
</feature>
<dbReference type="EMBL" id="CP000482">
    <property type="protein sequence ID" value="ABK98329.1"/>
    <property type="molecule type" value="Genomic_DNA"/>
</dbReference>
<dbReference type="RefSeq" id="WP_011734641.1">
    <property type="nucleotide sequence ID" value="NC_008609.1"/>
</dbReference>
<dbReference type="SMR" id="A1ALV9"/>
<dbReference type="STRING" id="338966.Ppro_0698"/>
<dbReference type="KEGG" id="ppd:Ppro_0698"/>
<dbReference type="eggNOG" id="COG1841">
    <property type="taxonomic scope" value="Bacteria"/>
</dbReference>
<dbReference type="HOGENOM" id="CLU_131047_2_1_7"/>
<dbReference type="OrthoDB" id="9812790at2"/>
<dbReference type="Proteomes" id="UP000006732">
    <property type="component" value="Chromosome"/>
</dbReference>
<dbReference type="GO" id="GO:0022625">
    <property type="term" value="C:cytosolic large ribosomal subunit"/>
    <property type="evidence" value="ECO:0007669"/>
    <property type="project" value="TreeGrafter"/>
</dbReference>
<dbReference type="GO" id="GO:0003735">
    <property type="term" value="F:structural constituent of ribosome"/>
    <property type="evidence" value="ECO:0007669"/>
    <property type="project" value="InterPro"/>
</dbReference>
<dbReference type="GO" id="GO:0006412">
    <property type="term" value="P:translation"/>
    <property type="evidence" value="ECO:0007669"/>
    <property type="project" value="InterPro"/>
</dbReference>
<dbReference type="CDD" id="cd01658">
    <property type="entry name" value="Ribosomal_L30"/>
    <property type="match status" value="1"/>
</dbReference>
<dbReference type="FunFam" id="3.30.1390.20:FF:000001">
    <property type="entry name" value="50S ribosomal protein L30"/>
    <property type="match status" value="1"/>
</dbReference>
<dbReference type="Gene3D" id="3.30.1390.20">
    <property type="entry name" value="Ribosomal protein L30, ferredoxin-like fold domain"/>
    <property type="match status" value="1"/>
</dbReference>
<dbReference type="HAMAP" id="MF_01371_B">
    <property type="entry name" value="Ribosomal_uL30_B"/>
    <property type="match status" value="1"/>
</dbReference>
<dbReference type="InterPro" id="IPR036919">
    <property type="entry name" value="Ribo_uL30_ferredoxin-like_sf"/>
</dbReference>
<dbReference type="InterPro" id="IPR005996">
    <property type="entry name" value="Ribosomal_uL30_bac-type"/>
</dbReference>
<dbReference type="InterPro" id="IPR016082">
    <property type="entry name" value="Ribosomal_uL30_ferredoxin-like"/>
</dbReference>
<dbReference type="NCBIfam" id="TIGR01308">
    <property type="entry name" value="rpmD_bact"/>
    <property type="match status" value="1"/>
</dbReference>
<dbReference type="PANTHER" id="PTHR15892:SF2">
    <property type="entry name" value="LARGE RIBOSOMAL SUBUNIT PROTEIN UL30M"/>
    <property type="match status" value="1"/>
</dbReference>
<dbReference type="PANTHER" id="PTHR15892">
    <property type="entry name" value="MITOCHONDRIAL RIBOSOMAL PROTEIN L30"/>
    <property type="match status" value="1"/>
</dbReference>
<dbReference type="Pfam" id="PF00327">
    <property type="entry name" value="Ribosomal_L30"/>
    <property type="match status" value="1"/>
</dbReference>
<dbReference type="PIRSF" id="PIRSF002211">
    <property type="entry name" value="Ribosomal_L30_bac-type"/>
    <property type="match status" value="1"/>
</dbReference>
<dbReference type="SUPFAM" id="SSF55129">
    <property type="entry name" value="Ribosomal protein L30p/L7e"/>
    <property type="match status" value="1"/>
</dbReference>
<keyword id="KW-1185">Reference proteome</keyword>
<keyword id="KW-0687">Ribonucleoprotein</keyword>
<keyword id="KW-0689">Ribosomal protein</keyword>
<evidence type="ECO:0000255" key="1">
    <source>
        <dbReference type="HAMAP-Rule" id="MF_01371"/>
    </source>
</evidence>
<evidence type="ECO:0000305" key="2"/>